<accession>O59045</accession>
<evidence type="ECO:0000255" key="1"/>
<evidence type="ECO:0000305" key="2"/>
<dbReference type="EMBL" id="BA000001">
    <property type="protein sequence ID" value="BAA30427.1"/>
    <property type="molecule type" value="Genomic_DNA"/>
</dbReference>
<dbReference type="PIR" id="C71003">
    <property type="entry name" value="C71003"/>
</dbReference>
<dbReference type="RefSeq" id="WP_010885413.1">
    <property type="nucleotide sequence ID" value="NC_000961.1"/>
</dbReference>
<dbReference type="SMR" id="O59045"/>
<dbReference type="STRING" id="70601.gene:9378294"/>
<dbReference type="EnsemblBacteria" id="BAA30427">
    <property type="protein sequence ID" value="BAA30427"/>
    <property type="gene ID" value="BAA30427"/>
</dbReference>
<dbReference type="GeneID" id="1443650"/>
<dbReference type="KEGG" id="pho:PH1321"/>
<dbReference type="eggNOG" id="arCOG07144">
    <property type="taxonomic scope" value="Archaea"/>
</dbReference>
<dbReference type="OrthoDB" id="86147at2157"/>
<dbReference type="Proteomes" id="UP000000752">
    <property type="component" value="Chromosome"/>
</dbReference>
<dbReference type="GO" id="GO:0016020">
    <property type="term" value="C:membrane"/>
    <property type="evidence" value="ECO:0007669"/>
    <property type="project" value="UniProtKB-SubCell"/>
</dbReference>
<dbReference type="Gene3D" id="3.10.620.30">
    <property type="match status" value="1"/>
</dbReference>
<dbReference type="InterPro" id="IPR007562">
    <property type="entry name" value="Transglutaminase-like_domain"/>
</dbReference>
<dbReference type="Pfam" id="PF04473">
    <property type="entry name" value="DUF553"/>
    <property type="match status" value="1"/>
</dbReference>
<protein>
    <recommendedName>
        <fullName>UPF0252 protein PH1321</fullName>
    </recommendedName>
</protein>
<sequence>MQEYKELIKECAKELEGLMPEISQKLVNIAKINSPDRAFLEYLKVVEQVSLMKTERKQKNKALIILWRYGEALEKELYSDVKFFAKPLHKRIFRFVDWKIIGMLFLVFIILPAITSNLWSFRSEHYVLYLNENVDFPRELCNYRTSWLYDFRTSMVCVLKYGYGSINVTLRGNSWEKGVEAQRFISDMEYDFDRVKSPITYIQTPKETLRYKKGVCSDFALLVANILLDNNVSPVYIVHTVVRKEPSGGHAAAGIYVNGTLWILDWGSKPTKFQEYLENIDRIWEIREVRIYRITRDRITLERIYKARLEDDRWRFLYSVIIMLGIFILKRREWWIM</sequence>
<feature type="chain" id="PRO_0000159561" description="UPF0252 protein PH1321">
    <location>
        <begin position="1"/>
        <end position="337"/>
    </location>
</feature>
<feature type="transmembrane region" description="Helical" evidence="1">
    <location>
        <begin position="100"/>
        <end position="120"/>
    </location>
</feature>
<keyword id="KW-0472">Membrane</keyword>
<keyword id="KW-0812">Transmembrane</keyword>
<keyword id="KW-1133">Transmembrane helix</keyword>
<proteinExistence type="inferred from homology"/>
<organism>
    <name type="scientific">Pyrococcus horikoshii (strain ATCC 700860 / DSM 12428 / JCM 9974 / NBRC 100139 / OT-3)</name>
    <dbReference type="NCBI Taxonomy" id="70601"/>
    <lineage>
        <taxon>Archaea</taxon>
        <taxon>Methanobacteriati</taxon>
        <taxon>Methanobacteriota</taxon>
        <taxon>Thermococci</taxon>
        <taxon>Thermococcales</taxon>
        <taxon>Thermococcaceae</taxon>
        <taxon>Pyrococcus</taxon>
    </lineage>
</organism>
<name>Y1321_PYRHO</name>
<comment type="subcellular location">
    <subcellularLocation>
        <location evidence="2">Membrane</location>
        <topology evidence="2">Single-pass membrane protein</topology>
    </subcellularLocation>
</comment>
<comment type="similarity">
    <text evidence="2">Belongs to the UPF0252 family.</text>
</comment>
<gene>
    <name type="ordered locus">PH1321</name>
</gene>
<reference key="1">
    <citation type="journal article" date="1998" name="DNA Res.">
        <title>Complete sequence and gene organization of the genome of a hyper-thermophilic archaebacterium, Pyrococcus horikoshii OT3.</title>
        <authorList>
            <person name="Kawarabayasi Y."/>
            <person name="Sawada M."/>
            <person name="Horikawa H."/>
            <person name="Haikawa Y."/>
            <person name="Hino Y."/>
            <person name="Yamamoto S."/>
            <person name="Sekine M."/>
            <person name="Baba S."/>
            <person name="Kosugi H."/>
            <person name="Hosoyama A."/>
            <person name="Nagai Y."/>
            <person name="Sakai M."/>
            <person name="Ogura K."/>
            <person name="Otsuka R."/>
            <person name="Nakazawa H."/>
            <person name="Takamiya M."/>
            <person name="Ohfuku Y."/>
            <person name="Funahashi T."/>
            <person name="Tanaka T."/>
            <person name="Kudoh Y."/>
            <person name="Yamazaki J."/>
            <person name="Kushida N."/>
            <person name="Oguchi A."/>
            <person name="Aoki K."/>
            <person name="Yoshizawa T."/>
            <person name="Nakamura Y."/>
            <person name="Robb F.T."/>
            <person name="Horikoshi K."/>
            <person name="Masuchi Y."/>
            <person name="Shizuya H."/>
            <person name="Kikuchi H."/>
        </authorList>
    </citation>
    <scope>NUCLEOTIDE SEQUENCE [LARGE SCALE GENOMIC DNA]</scope>
    <source>
        <strain>ATCC 700860 / DSM 12428 / JCM 9974 / NBRC 100139 / OT-3</strain>
    </source>
</reference>